<reference key="1">
    <citation type="journal article" date="1992" name="Mol. Endocrinol.">
        <title>One of the two trout proopiomelanocortin messenger RNAs potentially encodes new peptides.</title>
        <authorList>
            <person name="Salbert G."/>
            <person name="Chauveau I."/>
            <person name="Bonnec G."/>
            <person name="Valotaire Y."/>
            <person name="Jego P."/>
        </authorList>
    </citation>
    <scope>NUCLEOTIDE SEQUENCE [MRNA]</scope>
    <source>
        <tissue>Pituitary</tissue>
    </source>
</reference>
<organism>
    <name type="scientific">Oncorhynchus mykiss</name>
    <name type="common">Rainbow trout</name>
    <name type="synonym">Salmo gairdneri</name>
    <dbReference type="NCBI Taxonomy" id="8022"/>
    <lineage>
        <taxon>Eukaryota</taxon>
        <taxon>Metazoa</taxon>
        <taxon>Chordata</taxon>
        <taxon>Craniata</taxon>
        <taxon>Vertebrata</taxon>
        <taxon>Euteleostomi</taxon>
        <taxon>Actinopterygii</taxon>
        <taxon>Neopterygii</taxon>
        <taxon>Teleostei</taxon>
        <taxon>Protacanthopterygii</taxon>
        <taxon>Salmoniformes</taxon>
        <taxon>Salmonidae</taxon>
        <taxon>Salmoninae</taxon>
        <taxon>Oncorhynchus</taxon>
    </lineage>
</organism>
<feature type="signal peptide" evidence="3">
    <location>
        <begin position="1"/>
        <end position="36"/>
    </location>
</feature>
<feature type="peptide" id="PRO_0000025103" description="NPP 2" evidence="1">
    <location>
        <begin position="37"/>
        <end position="108"/>
    </location>
</feature>
<feature type="propeptide" id="PRO_0000025104" evidence="3">
    <location>
        <position position="111"/>
    </location>
</feature>
<feature type="peptide" id="PRO_0000025105" description="Corticotropin" evidence="1">
    <location>
        <begin position="112"/>
        <end position="152"/>
    </location>
</feature>
<feature type="peptide" id="PRO_0000025106" description="Melanocyte-stimulating hormone alpha 2" evidence="1">
    <location>
        <begin position="112"/>
        <end position="124"/>
    </location>
</feature>
<feature type="peptide" id="PRO_0000025107" description="Corticotropin-like intermediary peptide 2" evidence="1">
    <location>
        <begin position="130"/>
        <end position="152"/>
    </location>
</feature>
<feature type="peptide" id="PRO_0000025108" description="Lipotropin beta" evidence="1">
    <location>
        <begin position="155"/>
        <end position="240"/>
    </location>
</feature>
<feature type="peptide" id="PRO_0000025109" description="Lipotropin gamma" evidence="1">
    <location>
        <begin position="155"/>
        <end position="209"/>
    </location>
</feature>
<feature type="peptide" id="PRO_0000025110" description="Melanocyte-stimulating hormone beta 2" evidence="1">
    <location>
        <begin position="193"/>
        <end position="209"/>
    </location>
</feature>
<feature type="peptide" id="PRO_0000025111" description="Beta-endorphin 2" evidence="1">
    <location>
        <begin position="212"/>
        <end position="240"/>
    </location>
</feature>
<feature type="peptide" id="PRO_0000025112" description="Met-enkephalin">
    <location>
        <begin position="212"/>
        <end position="216"/>
    </location>
</feature>
<feature type="modified residue" description="Pyrrolidone carboxylic acid" evidence="1">
    <location>
        <position position="37"/>
    </location>
</feature>
<feature type="modified residue" description="N-acetylserine; in Corticotropin" evidence="1">
    <location>
        <position position="112"/>
    </location>
</feature>
<feature type="modified residue" description="Isoleucine amide" evidence="1">
    <location>
        <position position="124"/>
    </location>
</feature>
<accession>Q04618</accession>
<evidence type="ECO:0000250" key="1"/>
<evidence type="ECO:0000250" key="2">
    <source>
        <dbReference type="UniProtKB" id="P01193"/>
    </source>
</evidence>
<evidence type="ECO:0000255" key="3"/>
<evidence type="ECO:0000305" key="4"/>
<proteinExistence type="evidence at transcript level"/>
<comment type="function">
    <molecule>Corticotropin</molecule>
    <text>Stimulates the adrenal glands to release cortisol.</text>
</comment>
<comment type="function">
    <text>Melanocyte-stimulating hormone alpha: Anorexigenic peptide. Increases the pigmentation of skin by increasing melanin production in melanocytes.</text>
</comment>
<comment type="function">
    <text>Melanocyte-stimulating hormone beta: Increases the pigmentation of skin by increasing melanin production in melanocytes.</text>
</comment>
<comment type="function">
    <text>Beta-endorphin: Endogenous orexigenic opiate.</text>
</comment>
<comment type="function">
    <molecule>Met-enkephalin</molecule>
    <text>Endogenous opiate.</text>
</comment>
<comment type="subcellular location">
    <subcellularLocation>
        <location evidence="2">Secreted</location>
    </subcellularLocation>
    <text evidence="2">Melanocyte-stimulating hormone alpha and beta-endorphin are stored in separate granules in hypothalamic POMC neurons, suggesting that secretion may be under the control of different regulatory mechanisms.</text>
</comment>
<comment type="tissue specificity">
    <text>Pituitary and hypothalamus of adult diploid animals.</text>
</comment>
<comment type="developmental stage">
    <text>Expressed only in sexually active fish.</text>
</comment>
<comment type="PTM">
    <text>Specific enzymatic cleavages at paired basic residues yield the different active peptides.</text>
</comment>
<comment type="PTM">
    <text>Acetylation of beta-endorphin occurs in a tissue-specific manner.</text>
</comment>
<comment type="similarity">
    <text evidence="4">Belongs to the POMC family.</text>
</comment>
<comment type="caution">
    <text evidence="4">It is uncertain whether Met-1 or Met-15 is the initiator.</text>
</comment>
<keyword id="KW-0007">Acetylation</keyword>
<keyword id="KW-0027">Amidation</keyword>
<keyword id="KW-0165">Cleavage on pair of basic residues</keyword>
<keyword id="KW-0257">Endorphin</keyword>
<keyword id="KW-0372">Hormone</keyword>
<keyword id="KW-0873">Pyrrolidone carboxylic acid</keyword>
<keyword id="KW-0964">Secreted</keyword>
<keyword id="KW-0732">Signal</keyword>
<protein>
    <recommendedName>
        <fullName>Pro-opiomelanocortin B</fullName>
        <shortName>POMC-B</shortName>
    </recommendedName>
    <alternativeName>
        <fullName>Corticotropin-lipotropin B</fullName>
    </alternativeName>
    <component>
        <recommendedName>
            <fullName>NPP 2</fullName>
        </recommendedName>
    </component>
    <component>
        <recommendedName>
            <fullName>Corticotropin</fullName>
        </recommendedName>
        <alternativeName>
            <fullName>Adrenocorticotropic hormone</fullName>
            <shortName>ACTH</shortName>
        </alternativeName>
    </component>
    <component>
        <recommendedName>
            <fullName>Melanocyte-stimulating hormone alpha 2</fullName>
            <shortName>Alpha-MSH 2</shortName>
        </recommendedName>
        <alternativeName>
            <fullName>Melanotropin alpha 2</fullName>
        </alternativeName>
    </component>
    <component>
        <recommendedName>
            <fullName>Corticotropin-like intermediary peptide 2</fullName>
            <shortName>CLIP-2</shortName>
        </recommendedName>
    </component>
    <component>
        <recommendedName>
            <fullName>Lipotropin beta</fullName>
        </recommendedName>
        <alternativeName>
            <fullName>Beta-LPH</fullName>
        </alternativeName>
    </component>
    <component>
        <recommendedName>
            <fullName>Lipotropin gamma</fullName>
        </recommendedName>
        <alternativeName>
            <fullName>Gamma-LPH</fullName>
        </alternativeName>
    </component>
    <component>
        <recommendedName>
            <fullName>Melanocyte-stimulating hormone beta 2</fullName>
            <shortName>Beta-MSH 2</shortName>
        </recommendedName>
        <alternativeName>
            <fullName>Melanotropin beta 2</fullName>
        </alternativeName>
    </component>
    <component>
        <recommendedName>
            <fullName>Beta-endorphin 2</fullName>
        </recommendedName>
    </component>
    <component>
        <recommendedName>
            <fullName>Met-enkephalin</fullName>
        </recommendedName>
    </component>
</protein>
<name>COLI2_ONCMY</name>
<sequence>MFGTFLQNQSVRLNMVCAPWLLAVVVVCVCNPGVEGQCWDSSHCKDLPSEDKILECIHLFRSGLQDESPEPRSAAQQSTEESLSLGILLAALTSGERALDADPEPHSDKRHSYSMEHFRWGKPIGHKRRPIKVYASSLEGGDSSEGTFPLQARRQLSSWEDEMVGALGNQGAKAQTKVVPRTLTVTGLQDKKDGSYRMGHFRWGSPTAIKRYGGFMKPYTQQSHKPLITLLKHVTLKNEQ</sequence>
<gene>
    <name type="primary">pomcb</name>
</gene>
<dbReference type="EMBL" id="X69809">
    <property type="protein sequence ID" value="CAA49467.1"/>
    <property type="molecule type" value="mRNA"/>
</dbReference>
<dbReference type="PIR" id="B45359">
    <property type="entry name" value="B45359"/>
</dbReference>
<dbReference type="RefSeq" id="NP_001118191.1">
    <property type="nucleotide sequence ID" value="NM_001124719.1"/>
</dbReference>
<dbReference type="GeneID" id="100136772"/>
<dbReference type="KEGG" id="omy:100136772"/>
<dbReference type="OrthoDB" id="8962839at2759"/>
<dbReference type="Proteomes" id="UP000694395">
    <property type="component" value="Unplaced"/>
</dbReference>
<dbReference type="GO" id="GO:0005576">
    <property type="term" value="C:extracellular region"/>
    <property type="evidence" value="ECO:0007669"/>
    <property type="project" value="UniProtKB-SubCell"/>
</dbReference>
<dbReference type="GO" id="GO:0005184">
    <property type="term" value="F:neuropeptide hormone activity"/>
    <property type="evidence" value="ECO:0007669"/>
    <property type="project" value="TreeGrafter"/>
</dbReference>
<dbReference type="GO" id="GO:0007218">
    <property type="term" value="P:neuropeptide signaling pathway"/>
    <property type="evidence" value="ECO:0007669"/>
    <property type="project" value="UniProtKB-KW"/>
</dbReference>
<dbReference type="InterPro" id="IPR013531">
    <property type="entry name" value="Mcrtin_ACTH_cent"/>
</dbReference>
<dbReference type="InterPro" id="IPR013593">
    <property type="entry name" value="Melanocortin_N"/>
</dbReference>
<dbReference type="InterPro" id="IPR013532">
    <property type="entry name" value="Opioid_neuropept"/>
</dbReference>
<dbReference type="InterPro" id="IPR001941">
    <property type="entry name" value="PMOC"/>
</dbReference>
<dbReference type="InterPro" id="IPR050878">
    <property type="entry name" value="POMC-derived_peptides"/>
</dbReference>
<dbReference type="PANTHER" id="PTHR11416">
    <property type="entry name" value="PRO-OPIOMELANOCORTIN"/>
    <property type="match status" value="1"/>
</dbReference>
<dbReference type="PANTHER" id="PTHR11416:SF7">
    <property type="entry name" value="PRO-OPIOMELANOCORTIN"/>
    <property type="match status" value="1"/>
</dbReference>
<dbReference type="Pfam" id="PF00976">
    <property type="entry name" value="ACTH_domain"/>
    <property type="match status" value="2"/>
</dbReference>
<dbReference type="Pfam" id="PF08384">
    <property type="entry name" value="NPP"/>
    <property type="match status" value="1"/>
</dbReference>
<dbReference type="Pfam" id="PF08035">
    <property type="entry name" value="Op_neuropeptide"/>
    <property type="match status" value="1"/>
</dbReference>
<dbReference type="PRINTS" id="PR00383">
    <property type="entry name" value="MELANOCORTIN"/>
</dbReference>
<dbReference type="SMART" id="SM01363">
    <property type="entry name" value="ACTH_domain"/>
    <property type="match status" value="2"/>
</dbReference>
<dbReference type="SMART" id="SM01364">
    <property type="entry name" value="NPP"/>
    <property type="match status" value="1"/>
</dbReference>
<dbReference type="SMART" id="SM01365">
    <property type="entry name" value="Op_neuropeptide"/>
    <property type="match status" value="1"/>
</dbReference>